<comment type="function">
    <text evidence="1">One of the primary rRNA binding proteins, it binds directly to 16S rRNA where it helps nucleate assembly of the platform of the 30S subunit by binding and bridging several RNA helices of the 16S rRNA.</text>
</comment>
<comment type="function">
    <text evidence="1">Forms an intersubunit bridge (bridge B4) with the 23S rRNA of the 50S subunit in the ribosome.</text>
</comment>
<comment type="subunit">
    <text evidence="1">Part of the 30S ribosomal subunit. Forms a bridge to the 50S subunit in the 70S ribosome, contacting the 23S rRNA.</text>
</comment>
<comment type="similarity">
    <text evidence="1">Belongs to the universal ribosomal protein uS15 family.</text>
</comment>
<proteinExistence type="inferred from homology"/>
<keyword id="KW-1185">Reference proteome</keyword>
<keyword id="KW-0687">Ribonucleoprotein</keyword>
<keyword id="KW-0689">Ribosomal protein</keyword>
<keyword id="KW-0694">RNA-binding</keyword>
<keyword id="KW-0699">rRNA-binding</keyword>
<name>RS15_SALRD</name>
<feature type="chain" id="PRO_0000255529" description="Small ribosomal subunit protein uS15">
    <location>
        <begin position="1"/>
        <end position="88"/>
    </location>
</feature>
<feature type="region of interest" description="Disordered" evidence="2">
    <location>
        <begin position="1"/>
        <end position="24"/>
    </location>
</feature>
<feature type="compositionally biased region" description="Basic and acidic residues" evidence="2">
    <location>
        <begin position="1"/>
        <end position="12"/>
    </location>
</feature>
<dbReference type="EMBL" id="CP000159">
    <property type="protein sequence ID" value="ABC45196.1"/>
    <property type="molecule type" value="Genomic_DNA"/>
</dbReference>
<dbReference type="RefSeq" id="WP_011404516.1">
    <property type="nucleotide sequence ID" value="NC_007677.1"/>
</dbReference>
<dbReference type="RefSeq" id="YP_445891.1">
    <property type="nucleotide sequence ID" value="NC_007677.1"/>
</dbReference>
<dbReference type="SMR" id="Q2S1P0"/>
<dbReference type="STRING" id="309807.SRU_1774"/>
<dbReference type="EnsemblBacteria" id="ABC45196">
    <property type="protein sequence ID" value="ABC45196"/>
    <property type="gene ID" value="SRU_1774"/>
</dbReference>
<dbReference type="GeneID" id="83728703"/>
<dbReference type="KEGG" id="sru:SRU_1774"/>
<dbReference type="PATRIC" id="fig|309807.25.peg.1842"/>
<dbReference type="eggNOG" id="COG0184">
    <property type="taxonomic scope" value="Bacteria"/>
</dbReference>
<dbReference type="HOGENOM" id="CLU_148518_0_1_10"/>
<dbReference type="OrthoDB" id="9799262at2"/>
<dbReference type="Proteomes" id="UP000008674">
    <property type="component" value="Chromosome"/>
</dbReference>
<dbReference type="GO" id="GO:0022627">
    <property type="term" value="C:cytosolic small ribosomal subunit"/>
    <property type="evidence" value="ECO:0007669"/>
    <property type="project" value="TreeGrafter"/>
</dbReference>
<dbReference type="GO" id="GO:0019843">
    <property type="term" value="F:rRNA binding"/>
    <property type="evidence" value="ECO:0007669"/>
    <property type="project" value="UniProtKB-UniRule"/>
</dbReference>
<dbReference type="GO" id="GO:0003735">
    <property type="term" value="F:structural constituent of ribosome"/>
    <property type="evidence" value="ECO:0007669"/>
    <property type="project" value="InterPro"/>
</dbReference>
<dbReference type="GO" id="GO:0006412">
    <property type="term" value="P:translation"/>
    <property type="evidence" value="ECO:0007669"/>
    <property type="project" value="UniProtKB-UniRule"/>
</dbReference>
<dbReference type="CDD" id="cd00353">
    <property type="entry name" value="Ribosomal_S15p_S13e"/>
    <property type="match status" value="1"/>
</dbReference>
<dbReference type="FunFam" id="1.10.287.10:FF:000002">
    <property type="entry name" value="30S ribosomal protein S15"/>
    <property type="match status" value="1"/>
</dbReference>
<dbReference type="Gene3D" id="6.10.250.3130">
    <property type="match status" value="1"/>
</dbReference>
<dbReference type="Gene3D" id="1.10.287.10">
    <property type="entry name" value="S15/NS1, RNA-binding"/>
    <property type="match status" value="1"/>
</dbReference>
<dbReference type="HAMAP" id="MF_01343_B">
    <property type="entry name" value="Ribosomal_uS15_B"/>
    <property type="match status" value="1"/>
</dbReference>
<dbReference type="InterPro" id="IPR000589">
    <property type="entry name" value="Ribosomal_uS15"/>
</dbReference>
<dbReference type="InterPro" id="IPR005290">
    <property type="entry name" value="Ribosomal_uS15_bac-type"/>
</dbReference>
<dbReference type="InterPro" id="IPR009068">
    <property type="entry name" value="uS15_NS1_RNA-bd_sf"/>
</dbReference>
<dbReference type="NCBIfam" id="TIGR00952">
    <property type="entry name" value="S15_bact"/>
    <property type="match status" value="1"/>
</dbReference>
<dbReference type="PANTHER" id="PTHR23321">
    <property type="entry name" value="RIBOSOMAL PROTEIN S15, BACTERIAL AND ORGANELLAR"/>
    <property type="match status" value="1"/>
</dbReference>
<dbReference type="PANTHER" id="PTHR23321:SF26">
    <property type="entry name" value="SMALL RIBOSOMAL SUBUNIT PROTEIN US15M"/>
    <property type="match status" value="1"/>
</dbReference>
<dbReference type="Pfam" id="PF00312">
    <property type="entry name" value="Ribosomal_S15"/>
    <property type="match status" value="1"/>
</dbReference>
<dbReference type="SMART" id="SM01387">
    <property type="entry name" value="Ribosomal_S15"/>
    <property type="match status" value="1"/>
</dbReference>
<dbReference type="SUPFAM" id="SSF47060">
    <property type="entry name" value="S15/NS1 RNA-binding domain"/>
    <property type="match status" value="1"/>
</dbReference>
<dbReference type="PROSITE" id="PS00362">
    <property type="entry name" value="RIBOSOMAL_S15"/>
    <property type="match status" value="1"/>
</dbReference>
<reference key="1">
    <citation type="journal article" date="2005" name="Proc. Natl. Acad. Sci. U.S.A.">
        <title>The genome of Salinibacter ruber: convergence and gene exchange among hyperhalophilic bacteria and archaea.</title>
        <authorList>
            <person name="Mongodin E.F."/>
            <person name="Nelson K.E."/>
            <person name="Daugherty S."/>
            <person name="DeBoy R.T."/>
            <person name="Wister J."/>
            <person name="Khouri H."/>
            <person name="Weidman J."/>
            <person name="Walsh D.A."/>
            <person name="Papke R.T."/>
            <person name="Sanchez Perez G."/>
            <person name="Sharma A.K."/>
            <person name="Nesbo C.L."/>
            <person name="MacLeod D."/>
            <person name="Bapteste E."/>
            <person name="Doolittle W.F."/>
            <person name="Charlebois R.L."/>
            <person name="Legault B."/>
            <person name="Rodriguez-Valera F."/>
        </authorList>
    </citation>
    <scope>NUCLEOTIDE SEQUENCE [LARGE SCALE GENOMIC DNA]</scope>
    <source>
        <strain>DSM 13855 / CECT 5946 / M31</strain>
    </source>
</reference>
<organism>
    <name type="scientific">Salinibacter ruber (strain DSM 13855 / M31)</name>
    <dbReference type="NCBI Taxonomy" id="309807"/>
    <lineage>
        <taxon>Bacteria</taxon>
        <taxon>Pseudomonadati</taxon>
        <taxon>Rhodothermota</taxon>
        <taxon>Rhodothermia</taxon>
        <taxon>Rhodothermales</taxon>
        <taxon>Salinibacteraceae</taxon>
        <taxon>Salinibacter</taxon>
    </lineage>
</organism>
<gene>
    <name evidence="1" type="primary">rpsO</name>
    <name type="ordered locus">SRU_1774</name>
</gene>
<sequence>MITQEEQQKIIDRFGNGPNDTGTPEVQIAIFTKRIEHLTEHLEDHPNDNSTRQGLLDLVGKRRRLLNYLQENEIERYRTIRDELELRK</sequence>
<accession>Q2S1P0</accession>
<protein>
    <recommendedName>
        <fullName evidence="1">Small ribosomal subunit protein uS15</fullName>
    </recommendedName>
    <alternativeName>
        <fullName evidence="3">30S ribosomal protein S15</fullName>
    </alternativeName>
</protein>
<evidence type="ECO:0000255" key="1">
    <source>
        <dbReference type="HAMAP-Rule" id="MF_01343"/>
    </source>
</evidence>
<evidence type="ECO:0000256" key="2">
    <source>
        <dbReference type="SAM" id="MobiDB-lite"/>
    </source>
</evidence>
<evidence type="ECO:0000305" key="3"/>